<sequence>MPKITKIEVQKKNKERFNLFLDEQFEMGIDIDTLVKFNLKKGQQLEAADMAEIQKYDHYRIGLNKAIQYLSYKKRTEKEVIQYLQKEEISEQAISEVIEYCYREKLIDHQDYAESLKNTMIRTTDKGPKIYQQKLYQLGIEPNIIEIFTELYREQQELDDIIQIAEKISKTKKGPQNKVKEKVMQSLIQKGFEMETIHAVLNEMDFTQDEAVLDDLLQRDLEKIYNKNRKKYTQQKLISKTIEGLMRKGYKYDKIKAKLEESGIADGTEEIE</sequence>
<reference key="1">
    <citation type="journal article" date="2007" name="BMC Microbiol.">
        <title>Subtle genetic changes enhance virulence of methicillin resistant and sensitive Staphylococcus aureus.</title>
        <authorList>
            <person name="Highlander S.K."/>
            <person name="Hulten K.G."/>
            <person name="Qin X."/>
            <person name="Jiang H."/>
            <person name="Yerrapragada S."/>
            <person name="Mason E.O. Jr."/>
            <person name="Shang Y."/>
            <person name="Williams T.M."/>
            <person name="Fortunov R.M."/>
            <person name="Liu Y."/>
            <person name="Igboeli O."/>
            <person name="Petrosino J."/>
            <person name="Tirumalai M."/>
            <person name="Uzman A."/>
            <person name="Fox G.E."/>
            <person name="Cardenas A.M."/>
            <person name="Muzny D.M."/>
            <person name="Hemphill L."/>
            <person name="Ding Y."/>
            <person name="Dugan S."/>
            <person name="Blyth P.R."/>
            <person name="Buhay C.J."/>
            <person name="Dinh H.H."/>
            <person name="Hawes A.C."/>
            <person name="Holder M."/>
            <person name="Kovar C.L."/>
            <person name="Lee S.L."/>
            <person name="Liu W."/>
            <person name="Nazareth L.V."/>
            <person name="Wang Q."/>
            <person name="Zhou J."/>
            <person name="Kaplan S.L."/>
            <person name="Weinstock G.M."/>
        </authorList>
    </citation>
    <scope>NUCLEOTIDE SEQUENCE [LARGE SCALE GENOMIC DNA]</scope>
    <source>
        <strain>USA300 / TCH1516</strain>
    </source>
</reference>
<feature type="chain" id="PRO_1000084992" description="Regulatory protein RecX">
    <location>
        <begin position="1"/>
        <end position="272"/>
    </location>
</feature>
<name>RECX_STAAT</name>
<evidence type="ECO:0000255" key="1">
    <source>
        <dbReference type="HAMAP-Rule" id="MF_01114"/>
    </source>
</evidence>
<organism>
    <name type="scientific">Staphylococcus aureus (strain USA300 / TCH1516)</name>
    <dbReference type="NCBI Taxonomy" id="451516"/>
    <lineage>
        <taxon>Bacteria</taxon>
        <taxon>Bacillati</taxon>
        <taxon>Bacillota</taxon>
        <taxon>Bacilli</taxon>
        <taxon>Bacillales</taxon>
        <taxon>Staphylococcaceae</taxon>
        <taxon>Staphylococcus</taxon>
    </lineage>
</organism>
<protein>
    <recommendedName>
        <fullName evidence="1">Regulatory protein RecX</fullName>
    </recommendedName>
</protein>
<gene>
    <name evidence="1" type="primary">recX</name>
    <name type="ordered locus">USA300HOU_1868</name>
</gene>
<accession>A8YY45</accession>
<dbReference type="EMBL" id="CP000730">
    <property type="protein sequence ID" value="ABX29871.1"/>
    <property type="molecule type" value="Genomic_DNA"/>
</dbReference>
<dbReference type="RefSeq" id="WP_001124419.1">
    <property type="nucleotide sequence ID" value="NC_010079.1"/>
</dbReference>
<dbReference type="SMR" id="A8YY45"/>
<dbReference type="KEGG" id="sax:USA300HOU_1868"/>
<dbReference type="HOGENOM" id="CLU_066607_4_0_9"/>
<dbReference type="GO" id="GO:0005737">
    <property type="term" value="C:cytoplasm"/>
    <property type="evidence" value="ECO:0007669"/>
    <property type="project" value="UniProtKB-SubCell"/>
</dbReference>
<dbReference type="GO" id="GO:0006282">
    <property type="term" value="P:regulation of DNA repair"/>
    <property type="evidence" value="ECO:0007669"/>
    <property type="project" value="UniProtKB-UniRule"/>
</dbReference>
<dbReference type="Gene3D" id="1.10.10.10">
    <property type="entry name" value="Winged helix-like DNA-binding domain superfamily/Winged helix DNA-binding domain"/>
    <property type="match status" value="4"/>
</dbReference>
<dbReference type="HAMAP" id="MF_01114">
    <property type="entry name" value="RecX"/>
    <property type="match status" value="1"/>
</dbReference>
<dbReference type="InterPro" id="IPR053926">
    <property type="entry name" value="RecX_HTH_1st"/>
</dbReference>
<dbReference type="InterPro" id="IPR053925">
    <property type="entry name" value="RecX_HTH_3rd"/>
</dbReference>
<dbReference type="InterPro" id="IPR003783">
    <property type="entry name" value="Regulatory_RecX"/>
</dbReference>
<dbReference type="InterPro" id="IPR036388">
    <property type="entry name" value="WH-like_DNA-bd_sf"/>
</dbReference>
<dbReference type="NCBIfam" id="NF010733">
    <property type="entry name" value="PRK14135.1"/>
    <property type="match status" value="1"/>
</dbReference>
<dbReference type="PANTHER" id="PTHR33602">
    <property type="entry name" value="REGULATORY PROTEIN RECX FAMILY PROTEIN"/>
    <property type="match status" value="1"/>
</dbReference>
<dbReference type="PANTHER" id="PTHR33602:SF1">
    <property type="entry name" value="REGULATORY PROTEIN RECX FAMILY PROTEIN"/>
    <property type="match status" value="1"/>
</dbReference>
<dbReference type="Pfam" id="PF21982">
    <property type="entry name" value="RecX_HTH1"/>
    <property type="match status" value="1"/>
</dbReference>
<dbReference type="Pfam" id="PF21981">
    <property type="entry name" value="RecX_HTH3"/>
    <property type="match status" value="1"/>
</dbReference>
<comment type="function">
    <text evidence="1">Modulates RecA activity.</text>
</comment>
<comment type="subcellular location">
    <subcellularLocation>
        <location evidence="1">Cytoplasm</location>
    </subcellularLocation>
</comment>
<comment type="similarity">
    <text evidence="1">Belongs to the RecX family.</text>
</comment>
<keyword id="KW-0963">Cytoplasm</keyword>
<proteinExistence type="inferred from homology"/>